<name>LIPA_CUPMC</name>
<proteinExistence type="inferred from homology"/>
<comment type="function">
    <text evidence="1">Catalyzes the radical-mediated insertion of two sulfur atoms into the C-6 and C-8 positions of the octanoyl moiety bound to the lipoyl domains of lipoate-dependent enzymes, thereby converting the octanoylated domains into lipoylated derivatives.</text>
</comment>
<comment type="catalytic activity">
    <reaction evidence="1">
        <text>[[Fe-S] cluster scaffold protein carrying a second [4Fe-4S](2+) cluster] + N(6)-octanoyl-L-lysyl-[protein] + 2 oxidized [2Fe-2S]-[ferredoxin] + 2 S-adenosyl-L-methionine + 4 H(+) = [[Fe-S] cluster scaffold protein] + N(6)-[(R)-dihydrolipoyl]-L-lysyl-[protein] + 4 Fe(3+) + 2 hydrogen sulfide + 2 5'-deoxyadenosine + 2 L-methionine + 2 reduced [2Fe-2S]-[ferredoxin]</text>
        <dbReference type="Rhea" id="RHEA:16585"/>
        <dbReference type="Rhea" id="RHEA-COMP:9928"/>
        <dbReference type="Rhea" id="RHEA-COMP:10000"/>
        <dbReference type="Rhea" id="RHEA-COMP:10001"/>
        <dbReference type="Rhea" id="RHEA-COMP:10475"/>
        <dbReference type="Rhea" id="RHEA-COMP:14568"/>
        <dbReference type="Rhea" id="RHEA-COMP:14569"/>
        <dbReference type="ChEBI" id="CHEBI:15378"/>
        <dbReference type="ChEBI" id="CHEBI:17319"/>
        <dbReference type="ChEBI" id="CHEBI:29034"/>
        <dbReference type="ChEBI" id="CHEBI:29919"/>
        <dbReference type="ChEBI" id="CHEBI:33722"/>
        <dbReference type="ChEBI" id="CHEBI:33737"/>
        <dbReference type="ChEBI" id="CHEBI:33738"/>
        <dbReference type="ChEBI" id="CHEBI:57844"/>
        <dbReference type="ChEBI" id="CHEBI:59789"/>
        <dbReference type="ChEBI" id="CHEBI:78809"/>
        <dbReference type="ChEBI" id="CHEBI:83100"/>
        <dbReference type="EC" id="2.8.1.8"/>
    </reaction>
</comment>
<comment type="cofactor">
    <cofactor evidence="1">
        <name>[4Fe-4S] cluster</name>
        <dbReference type="ChEBI" id="CHEBI:49883"/>
    </cofactor>
    <text evidence="1">Binds 2 [4Fe-4S] clusters per subunit. One cluster is coordinated with 3 cysteines and an exchangeable S-adenosyl-L-methionine.</text>
</comment>
<comment type="pathway">
    <text evidence="1">Protein modification; protein lipoylation via endogenous pathway; protein N(6)-(lipoyl)lysine from octanoyl-[acyl-carrier-protein]: step 2/2.</text>
</comment>
<comment type="subcellular location">
    <subcellularLocation>
        <location evidence="1">Cytoplasm</location>
    </subcellularLocation>
</comment>
<comment type="similarity">
    <text evidence="1">Belongs to the radical SAM superfamily. Lipoyl synthase family.</text>
</comment>
<gene>
    <name evidence="1" type="primary">lipA</name>
    <name type="ordered locus">Rmet_0061</name>
</gene>
<accession>Q1LSC9</accession>
<evidence type="ECO:0000255" key="1">
    <source>
        <dbReference type="HAMAP-Rule" id="MF_00206"/>
    </source>
</evidence>
<evidence type="ECO:0000255" key="2">
    <source>
        <dbReference type="PROSITE-ProRule" id="PRU01266"/>
    </source>
</evidence>
<evidence type="ECO:0000256" key="3">
    <source>
        <dbReference type="SAM" id="MobiDB-lite"/>
    </source>
</evidence>
<sequence length="330" mass="36884">MSDAPIATSSEVTQSPADYDPTKKQKSAEKTARIPIKIVPAEKLKKPDWIRVKAATGNSRFYEIKDILRANNLVTVCEEASCPNIGECFGKGTATFMIMGDKCTRRCPFCDVGHGRPDPLDVNEPGNLARTIAQLKLNYVVITSVDRDDLRDGGAQHYVDCISQTRELSPNTRIEVLVPDFRGRLDRALDILQACPPDVMNHNMETVPRLYKQARPGADYAHSLKLLQDFKRRNPNVPTKSGLMVGLGETDEEILDVMRDMRAHDIDMLTIGQYLAPSNHHLPVTRYVHPDTFKMFEEEAYKMGFTHAAVGAMVRSSYHADQQAHQAGFA</sequence>
<keyword id="KW-0004">4Fe-4S</keyword>
<keyword id="KW-0963">Cytoplasm</keyword>
<keyword id="KW-0408">Iron</keyword>
<keyword id="KW-0411">Iron-sulfur</keyword>
<keyword id="KW-0479">Metal-binding</keyword>
<keyword id="KW-1185">Reference proteome</keyword>
<keyword id="KW-0949">S-adenosyl-L-methionine</keyword>
<keyword id="KW-0808">Transferase</keyword>
<reference key="1">
    <citation type="journal article" date="2010" name="PLoS ONE">
        <title>The complete genome sequence of Cupriavidus metallidurans strain CH34, a master survivalist in harsh and anthropogenic environments.</title>
        <authorList>
            <person name="Janssen P.J."/>
            <person name="Van Houdt R."/>
            <person name="Moors H."/>
            <person name="Monsieurs P."/>
            <person name="Morin N."/>
            <person name="Michaux A."/>
            <person name="Benotmane M.A."/>
            <person name="Leys N."/>
            <person name="Vallaeys T."/>
            <person name="Lapidus A."/>
            <person name="Monchy S."/>
            <person name="Medigue C."/>
            <person name="Taghavi S."/>
            <person name="McCorkle S."/>
            <person name="Dunn J."/>
            <person name="van der Lelie D."/>
            <person name="Mergeay M."/>
        </authorList>
    </citation>
    <scope>NUCLEOTIDE SEQUENCE [LARGE SCALE GENOMIC DNA]</scope>
    <source>
        <strain>ATCC 43123 / DSM 2839 / NBRC 102507 / CH34</strain>
    </source>
</reference>
<feature type="chain" id="PRO_0000325300" description="Lipoyl synthase">
    <location>
        <begin position="1"/>
        <end position="330"/>
    </location>
</feature>
<feature type="domain" description="Radical SAM core" evidence="2">
    <location>
        <begin position="88"/>
        <end position="306"/>
    </location>
</feature>
<feature type="region of interest" description="Disordered" evidence="3">
    <location>
        <begin position="1"/>
        <end position="31"/>
    </location>
</feature>
<feature type="compositionally biased region" description="Polar residues" evidence="3">
    <location>
        <begin position="7"/>
        <end position="16"/>
    </location>
</feature>
<feature type="compositionally biased region" description="Basic and acidic residues" evidence="3">
    <location>
        <begin position="20"/>
        <end position="31"/>
    </location>
</feature>
<feature type="binding site" evidence="1">
    <location>
        <position position="77"/>
    </location>
    <ligand>
        <name>[4Fe-4S] cluster</name>
        <dbReference type="ChEBI" id="CHEBI:49883"/>
        <label>1</label>
    </ligand>
</feature>
<feature type="binding site" evidence="1">
    <location>
        <position position="82"/>
    </location>
    <ligand>
        <name>[4Fe-4S] cluster</name>
        <dbReference type="ChEBI" id="CHEBI:49883"/>
        <label>1</label>
    </ligand>
</feature>
<feature type="binding site" evidence="1">
    <location>
        <position position="88"/>
    </location>
    <ligand>
        <name>[4Fe-4S] cluster</name>
        <dbReference type="ChEBI" id="CHEBI:49883"/>
        <label>1</label>
    </ligand>
</feature>
<feature type="binding site" evidence="1">
    <location>
        <position position="103"/>
    </location>
    <ligand>
        <name>[4Fe-4S] cluster</name>
        <dbReference type="ChEBI" id="CHEBI:49883"/>
        <label>2</label>
        <note>4Fe-4S-S-AdoMet</note>
    </ligand>
</feature>
<feature type="binding site" evidence="1">
    <location>
        <position position="107"/>
    </location>
    <ligand>
        <name>[4Fe-4S] cluster</name>
        <dbReference type="ChEBI" id="CHEBI:49883"/>
        <label>2</label>
        <note>4Fe-4S-S-AdoMet</note>
    </ligand>
</feature>
<feature type="binding site" evidence="1">
    <location>
        <position position="110"/>
    </location>
    <ligand>
        <name>[4Fe-4S] cluster</name>
        <dbReference type="ChEBI" id="CHEBI:49883"/>
        <label>2</label>
        <note>4Fe-4S-S-AdoMet</note>
    </ligand>
</feature>
<feature type="binding site" evidence="1">
    <location>
        <position position="317"/>
    </location>
    <ligand>
        <name>[4Fe-4S] cluster</name>
        <dbReference type="ChEBI" id="CHEBI:49883"/>
        <label>1</label>
    </ligand>
</feature>
<organism>
    <name type="scientific">Cupriavidus metallidurans (strain ATCC 43123 / DSM 2839 / NBRC 102507 / CH34)</name>
    <name type="common">Ralstonia metallidurans</name>
    <dbReference type="NCBI Taxonomy" id="266264"/>
    <lineage>
        <taxon>Bacteria</taxon>
        <taxon>Pseudomonadati</taxon>
        <taxon>Pseudomonadota</taxon>
        <taxon>Betaproteobacteria</taxon>
        <taxon>Burkholderiales</taxon>
        <taxon>Burkholderiaceae</taxon>
        <taxon>Cupriavidus</taxon>
    </lineage>
</organism>
<dbReference type="EC" id="2.8.1.8" evidence="1"/>
<dbReference type="EMBL" id="CP000352">
    <property type="protein sequence ID" value="ABF06947.1"/>
    <property type="molecule type" value="Genomic_DNA"/>
</dbReference>
<dbReference type="RefSeq" id="WP_011514986.1">
    <property type="nucleotide sequence ID" value="NC_007973.1"/>
</dbReference>
<dbReference type="SMR" id="Q1LSC9"/>
<dbReference type="STRING" id="266264.Rmet_0061"/>
<dbReference type="KEGG" id="rme:Rmet_0061"/>
<dbReference type="eggNOG" id="COG0320">
    <property type="taxonomic scope" value="Bacteria"/>
</dbReference>
<dbReference type="HOGENOM" id="CLU_033144_2_1_4"/>
<dbReference type="UniPathway" id="UPA00538">
    <property type="reaction ID" value="UER00593"/>
</dbReference>
<dbReference type="Proteomes" id="UP000002429">
    <property type="component" value="Chromosome"/>
</dbReference>
<dbReference type="GO" id="GO:0005737">
    <property type="term" value="C:cytoplasm"/>
    <property type="evidence" value="ECO:0007669"/>
    <property type="project" value="UniProtKB-SubCell"/>
</dbReference>
<dbReference type="GO" id="GO:0051539">
    <property type="term" value="F:4 iron, 4 sulfur cluster binding"/>
    <property type="evidence" value="ECO:0007669"/>
    <property type="project" value="UniProtKB-UniRule"/>
</dbReference>
<dbReference type="GO" id="GO:0016992">
    <property type="term" value="F:lipoate synthase activity"/>
    <property type="evidence" value="ECO:0007669"/>
    <property type="project" value="UniProtKB-UniRule"/>
</dbReference>
<dbReference type="GO" id="GO:0046872">
    <property type="term" value="F:metal ion binding"/>
    <property type="evidence" value="ECO:0007669"/>
    <property type="project" value="UniProtKB-KW"/>
</dbReference>
<dbReference type="CDD" id="cd01335">
    <property type="entry name" value="Radical_SAM"/>
    <property type="match status" value="1"/>
</dbReference>
<dbReference type="FunFam" id="3.20.20.70:FF:000023">
    <property type="entry name" value="Lipoyl synthase"/>
    <property type="match status" value="1"/>
</dbReference>
<dbReference type="Gene3D" id="3.20.20.70">
    <property type="entry name" value="Aldolase class I"/>
    <property type="match status" value="1"/>
</dbReference>
<dbReference type="HAMAP" id="MF_00206">
    <property type="entry name" value="Lipoyl_synth"/>
    <property type="match status" value="1"/>
</dbReference>
<dbReference type="InterPro" id="IPR013785">
    <property type="entry name" value="Aldolase_TIM"/>
</dbReference>
<dbReference type="InterPro" id="IPR006638">
    <property type="entry name" value="Elp3/MiaA/NifB-like_rSAM"/>
</dbReference>
<dbReference type="InterPro" id="IPR031691">
    <property type="entry name" value="LIAS_N"/>
</dbReference>
<dbReference type="InterPro" id="IPR003698">
    <property type="entry name" value="Lipoyl_synth"/>
</dbReference>
<dbReference type="InterPro" id="IPR007197">
    <property type="entry name" value="rSAM"/>
</dbReference>
<dbReference type="NCBIfam" id="TIGR00510">
    <property type="entry name" value="lipA"/>
    <property type="match status" value="1"/>
</dbReference>
<dbReference type="NCBIfam" id="NF004019">
    <property type="entry name" value="PRK05481.1"/>
    <property type="match status" value="1"/>
</dbReference>
<dbReference type="NCBIfam" id="NF009544">
    <property type="entry name" value="PRK12928.1"/>
    <property type="match status" value="1"/>
</dbReference>
<dbReference type="PANTHER" id="PTHR10949">
    <property type="entry name" value="LIPOYL SYNTHASE"/>
    <property type="match status" value="1"/>
</dbReference>
<dbReference type="PANTHER" id="PTHR10949:SF0">
    <property type="entry name" value="LIPOYL SYNTHASE, MITOCHONDRIAL"/>
    <property type="match status" value="1"/>
</dbReference>
<dbReference type="Pfam" id="PF16881">
    <property type="entry name" value="LIAS_N"/>
    <property type="match status" value="1"/>
</dbReference>
<dbReference type="Pfam" id="PF04055">
    <property type="entry name" value="Radical_SAM"/>
    <property type="match status" value="1"/>
</dbReference>
<dbReference type="PIRSF" id="PIRSF005963">
    <property type="entry name" value="Lipoyl_synth"/>
    <property type="match status" value="1"/>
</dbReference>
<dbReference type="SFLD" id="SFLDF00271">
    <property type="entry name" value="lipoyl_synthase"/>
    <property type="match status" value="1"/>
</dbReference>
<dbReference type="SFLD" id="SFLDS00029">
    <property type="entry name" value="Radical_SAM"/>
    <property type="match status" value="1"/>
</dbReference>
<dbReference type="SMART" id="SM00729">
    <property type="entry name" value="Elp3"/>
    <property type="match status" value="1"/>
</dbReference>
<dbReference type="SUPFAM" id="SSF102114">
    <property type="entry name" value="Radical SAM enzymes"/>
    <property type="match status" value="1"/>
</dbReference>
<dbReference type="PROSITE" id="PS51918">
    <property type="entry name" value="RADICAL_SAM"/>
    <property type="match status" value="1"/>
</dbReference>
<protein>
    <recommendedName>
        <fullName evidence="1">Lipoyl synthase</fullName>
        <ecNumber evidence="1">2.8.1.8</ecNumber>
    </recommendedName>
    <alternativeName>
        <fullName evidence="1">Lip-syn</fullName>
        <shortName evidence="1">LS</shortName>
    </alternativeName>
    <alternativeName>
        <fullName evidence="1">Lipoate synthase</fullName>
    </alternativeName>
    <alternativeName>
        <fullName evidence="1">Lipoic acid synthase</fullName>
    </alternativeName>
    <alternativeName>
        <fullName evidence="1">Sulfur insertion protein LipA</fullName>
    </alternativeName>
</protein>